<sequence>MAMTVHCDIVSAERQLFSGLVEIVVASGVEGDLGIMPGHAPLLTRLKPGPVRVKKQNGEEEVFYVSGGFLEVQPKLVTVLADTAERAENMDAAEAERAKARAKEALEGKSSEMDYSRAAATLIEAVAQLRAIQQLKNKR</sequence>
<protein>
    <recommendedName>
        <fullName evidence="1">ATP synthase epsilon chain</fullName>
    </recommendedName>
    <alternativeName>
        <fullName evidence="1">ATP synthase F1 sector epsilon subunit</fullName>
    </alternativeName>
    <alternativeName>
        <fullName evidence="1">F-ATPase epsilon subunit</fullName>
    </alternativeName>
</protein>
<proteinExistence type="inferred from homology"/>
<organism>
    <name type="scientific">Alcanivorax borkumensis (strain ATCC 700651 / DSM 11573 / NCIMB 13689 / SK2)</name>
    <dbReference type="NCBI Taxonomy" id="393595"/>
    <lineage>
        <taxon>Bacteria</taxon>
        <taxon>Pseudomonadati</taxon>
        <taxon>Pseudomonadota</taxon>
        <taxon>Gammaproteobacteria</taxon>
        <taxon>Oceanospirillales</taxon>
        <taxon>Alcanivoracaceae</taxon>
        <taxon>Alcanivorax</taxon>
    </lineage>
</organism>
<comment type="function">
    <text evidence="1">Produces ATP from ADP in the presence of a proton gradient across the membrane.</text>
</comment>
<comment type="subunit">
    <text>F-type ATPases have 2 components, CF(1) - the catalytic core - and CF(0) - the membrane proton channel. CF(1) has five subunits: alpha(3), beta(3), gamma(1), delta(1), epsilon(1). CF(0) has three main subunits: a, b and c.</text>
</comment>
<comment type="subcellular location">
    <subcellularLocation>
        <location evidence="1">Cell inner membrane</location>
        <topology evidence="1">Peripheral membrane protein</topology>
    </subcellularLocation>
</comment>
<comment type="similarity">
    <text evidence="1">Belongs to the ATPase epsilon chain family.</text>
</comment>
<reference key="1">
    <citation type="journal article" date="2006" name="Nat. Biotechnol.">
        <title>Genome sequence of the ubiquitous hydrocarbon-degrading marine bacterium Alcanivorax borkumensis.</title>
        <authorList>
            <person name="Schneiker S."/>
            <person name="Martins dos Santos V.A.P."/>
            <person name="Bartels D."/>
            <person name="Bekel T."/>
            <person name="Brecht M."/>
            <person name="Buhrmester J."/>
            <person name="Chernikova T.N."/>
            <person name="Denaro R."/>
            <person name="Ferrer M."/>
            <person name="Gertler C."/>
            <person name="Goesmann A."/>
            <person name="Golyshina O.V."/>
            <person name="Kaminski F."/>
            <person name="Khachane A.N."/>
            <person name="Lang S."/>
            <person name="Linke B."/>
            <person name="McHardy A.C."/>
            <person name="Meyer F."/>
            <person name="Nechitaylo T."/>
            <person name="Puehler A."/>
            <person name="Regenhardt D."/>
            <person name="Rupp O."/>
            <person name="Sabirova J.S."/>
            <person name="Selbitschka W."/>
            <person name="Yakimov M.M."/>
            <person name="Timmis K.N."/>
            <person name="Vorhoelter F.-J."/>
            <person name="Weidner S."/>
            <person name="Kaiser O."/>
            <person name="Golyshin P.N."/>
        </authorList>
    </citation>
    <scope>NUCLEOTIDE SEQUENCE [LARGE SCALE GENOMIC DNA]</scope>
    <source>
        <strain>ATCC 700651 / DSM 11573 / NCIMB 13689 / SK2</strain>
    </source>
</reference>
<dbReference type="EMBL" id="AM286690">
    <property type="protein sequence ID" value="CAL18173.1"/>
    <property type="molecule type" value="Genomic_DNA"/>
</dbReference>
<dbReference type="RefSeq" id="WP_011589996.1">
    <property type="nucleotide sequence ID" value="NC_008260.1"/>
</dbReference>
<dbReference type="SMR" id="Q0VKX5"/>
<dbReference type="STRING" id="393595.ABO_2725"/>
<dbReference type="KEGG" id="abo:ABO_2725"/>
<dbReference type="eggNOG" id="COG0355">
    <property type="taxonomic scope" value="Bacteria"/>
</dbReference>
<dbReference type="HOGENOM" id="CLU_084338_2_0_6"/>
<dbReference type="OrthoDB" id="9791445at2"/>
<dbReference type="Proteomes" id="UP000008871">
    <property type="component" value="Chromosome"/>
</dbReference>
<dbReference type="GO" id="GO:0005886">
    <property type="term" value="C:plasma membrane"/>
    <property type="evidence" value="ECO:0007669"/>
    <property type="project" value="UniProtKB-SubCell"/>
</dbReference>
<dbReference type="GO" id="GO:0045259">
    <property type="term" value="C:proton-transporting ATP synthase complex"/>
    <property type="evidence" value="ECO:0007669"/>
    <property type="project" value="UniProtKB-KW"/>
</dbReference>
<dbReference type="GO" id="GO:0005524">
    <property type="term" value="F:ATP binding"/>
    <property type="evidence" value="ECO:0007669"/>
    <property type="project" value="UniProtKB-UniRule"/>
</dbReference>
<dbReference type="GO" id="GO:0046933">
    <property type="term" value="F:proton-transporting ATP synthase activity, rotational mechanism"/>
    <property type="evidence" value="ECO:0007669"/>
    <property type="project" value="UniProtKB-UniRule"/>
</dbReference>
<dbReference type="CDD" id="cd12152">
    <property type="entry name" value="F1-ATPase_delta"/>
    <property type="match status" value="1"/>
</dbReference>
<dbReference type="FunFam" id="2.60.15.10:FF:000001">
    <property type="entry name" value="ATP synthase epsilon chain"/>
    <property type="match status" value="1"/>
</dbReference>
<dbReference type="Gene3D" id="1.20.5.440">
    <property type="entry name" value="ATP synthase delta/epsilon subunit, C-terminal domain"/>
    <property type="match status" value="1"/>
</dbReference>
<dbReference type="Gene3D" id="2.60.15.10">
    <property type="entry name" value="F0F1 ATP synthase delta/epsilon subunit, N-terminal"/>
    <property type="match status" value="1"/>
</dbReference>
<dbReference type="HAMAP" id="MF_00530">
    <property type="entry name" value="ATP_synth_epsil_bac"/>
    <property type="match status" value="1"/>
</dbReference>
<dbReference type="InterPro" id="IPR036794">
    <property type="entry name" value="ATP_F1_dsu/esu_C_sf"/>
</dbReference>
<dbReference type="InterPro" id="IPR001469">
    <property type="entry name" value="ATP_synth_F1_dsu/esu"/>
</dbReference>
<dbReference type="InterPro" id="IPR020546">
    <property type="entry name" value="ATP_synth_F1_dsu/esu_N"/>
</dbReference>
<dbReference type="InterPro" id="IPR020547">
    <property type="entry name" value="ATP_synth_F1_esu_C"/>
</dbReference>
<dbReference type="InterPro" id="IPR036771">
    <property type="entry name" value="ATPsynth_dsu/esu_N"/>
</dbReference>
<dbReference type="NCBIfam" id="TIGR01216">
    <property type="entry name" value="ATP_synt_epsi"/>
    <property type="match status" value="1"/>
</dbReference>
<dbReference type="NCBIfam" id="NF001847">
    <property type="entry name" value="PRK00571.1-4"/>
    <property type="match status" value="1"/>
</dbReference>
<dbReference type="NCBIfam" id="NF009977">
    <property type="entry name" value="PRK13442.1"/>
    <property type="match status" value="1"/>
</dbReference>
<dbReference type="PANTHER" id="PTHR13822">
    <property type="entry name" value="ATP SYNTHASE DELTA/EPSILON CHAIN"/>
    <property type="match status" value="1"/>
</dbReference>
<dbReference type="PANTHER" id="PTHR13822:SF10">
    <property type="entry name" value="ATP SYNTHASE EPSILON CHAIN, CHLOROPLASTIC"/>
    <property type="match status" value="1"/>
</dbReference>
<dbReference type="Pfam" id="PF00401">
    <property type="entry name" value="ATP-synt_DE"/>
    <property type="match status" value="1"/>
</dbReference>
<dbReference type="Pfam" id="PF02823">
    <property type="entry name" value="ATP-synt_DE_N"/>
    <property type="match status" value="1"/>
</dbReference>
<dbReference type="SUPFAM" id="SSF46604">
    <property type="entry name" value="Epsilon subunit of F1F0-ATP synthase C-terminal domain"/>
    <property type="match status" value="1"/>
</dbReference>
<dbReference type="SUPFAM" id="SSF51344">
    <property type="entry name" value="Epsilon subunit of F1F0-ATP synthase N-terminal domain"/>
    <property type="match status" value="1"/>
</dbReference>
<gene>
    <name evidence="1" type="primary">atpC</name>
    <name type="ordered locus">ABO_2725</name>
</gene>
<feature type="chain" id="PRO_0000265780" description="ATP synthase epsilon chain">
    <location>
        <begin position="1"/>
        <end position="139"/>
    </location>
</feature>
<keyword id="KW-0066">ATP synthesis</keyword>
<keyword id="KW-0997">Cell inner membrane</keyword>
<keyword id="KW-1003">Cell membrane</keyword>
<keyword id="KW-0139">CF(1)</keyword>
<keyword id="KW-0375">Hydrogen ion transport</keyword>
<keyword id="KW-0406">Ion transport</keyword>
<keyword id="KW-0472">Membrane</keyword>
<keyword id="KW-1185">Reference proteome</keyword>
<keyword id="KW-0813">Transport</keyword>
<name>ATPE_ALCBS</name>
<evidence type="ECO:0000255" key="1">
    <source>
        <dbReference type="HAMAP-Rule" id="MF_00530"/>
    </source>
</evidence>
<accession>Q0VKX5</accession>